<sequence length="607" mass="68203">MDNEQRLKRRENIRNFSIIAHIDHGKSTLADRILENTKSVETRDMQDQLLDSMDLERERGITIKLNAVRLKYEAKDGNTYTFHLIDTPGHVDFTYEVSRSLAACEGAILVVDAAQGIEAQTLANVYLALDNELELLPVINKIDLPAAEPERVKQEIEDMIGLDQDDVVLASAKSNIGIEEILEKIVEVVPAPDGDPEAPLKALIFDSEYDPYRGVISSIRIVDGVVKAGDKIRMMATGKEFEVTEVGINTPKQLPVDELTVGDVGYIIASIKNVDDSRVGDTITLASRPASEPLQGYKKMNPMVYCGLFPIDNKNYNDLREALEKLQLNDASLEFEPESSQALGFGYRTGFLGMLHMEIIQERIEREFGIELIATAPSVIYQCILRDGSEVTVDNPAQMPDRDKIDKIFEPYVRATMMVPNDYVGAVMELCQRKRGQFINMDYLDDIRVNIVYELPLAEVVFDFFDQLKSNTKGYASFDYEFIENKESNLVKMDILLNGDKVDALSFIVHRDFAYERGKALVEKLKTLIPRQQFEVPVQAAIGQKIVARTNIKSMGKNVLAKCYGGDISRKRKLLEKQKAGKAKMKAVGNIEIPQDAFLAVLKMDDE</sequence>
<protein>
    <recommendedName>
        <fullName evidence="1">Elongation factor 4</fullName>
        <shortName evidence="1">EF-4</shortName>
        <ecNumber evidence="1">3.6.5.n1</ecNumber>
    </recommendedName>
    <alternativeName>
        <fullName evidence="1">Ribosomal back-translocase LepA</fullName>
    </alternativeName>
</protein>
<proteinExistence type="inferred from homology"/>
<keyword id="KW-1003">Cell membrane</keyword>
<keyword id="KW-0342">GTP-binding</keyword>
<keyword id="KW-0378">Hydrolase</keyword>
<keyword id="KW-0472">Membrane</keyword>
<keyword id="KW-0547">Nucleotide-binding</keyword>
<keyword id="KW-0648">Protein biosynthesis</keyword>
<evidence type="ECO:0000255" key="1">
    <source>
        <dbReference type="HAMAP-Rule" id="MF_00071"/>
    </source>
</evidence>
<organism>
    <name type="scientific">Staphylococcus aureus (strain MW2)</name>
    <dbReference type="NCBI Taxonomy" id="196620"/>
    <lineage>
        <taxon>Bacteria</taxon>
        <taxon>Bacillati</taxon>
        <taxon>Bacillota</taxon>
        <taxon>Bacilli</taxon>
        <taxon>Bacillales</taxon>
        <taxon>Staphylococcaceae</taxon>
        <taxon>Staphylococcus</taxon>
    </lineage>
</organism>
<gene>
    <name evidence="1" type="primary">lepA</name>
    <name type="ordered locus">MW1536</name>
</gene>
<dbReference type="EC" id="3.6.5.n1" evidence="1"/>
<dbReference type="EMBL" id="BA000033">
    <property type="protein sequence ID" value="BAB95401.1"/>
    <property type="molecule type" value="Genomic_DNA"/>
</dbReference>
<dbReference type="RefSeq" id="WP_000368337.1">
    <property type="nucleotide sequence ID" value="NC_003923.1"/>
</dbReference>
<dbReference type="SMR" id="Q8NWA7"/>
<dbReference type="KEGG" id="sam:MW1536"/>
<dbReference type="HOGENOM" id="CLU_009995_3_3_9"/>
<dbReference type="GO" id="GO:0005886">
    <property type="term" value="C:plasma membrane"/>
    <property type="evidence" value="ECO:0007669"/>
    <property type="project" value="UniProtKB-SubCell"/>
</dbReference>
<dbReference type="GO" id="GO:0005525">
    <property type="term" value="F:GTP binding"/>
    <property type="evidence" value="ECO:0007669"/>
    <property type="project" value="UniProtKB-UniRule"/>
</dbReference>
<dbReference type="GO" id="GO:0003924">
    <property type="term" value="F:GTPase activity"/>
    <property type="evidence" value="ECO:0007669"/>
    <property type="project" value="UniProtKB-UniRule"/>
</dbReference>
<dbReference type="GO" id="GO:0043022">
    <property type="term" value="F:ribosome binding"/>
    <property type="evidence" value="ECO:0007669"/>
    <property type="project" value="UniProtKB-UniRule"/>
</dbReference>
<dbReference type="GO" id="GO:0003746">
    <property type="term" value="F:translation elongation factor activity"/>
    <property type="evidence" value="ECO:0007669"/>
    <property type="project" value="UniProtKB-UniRule"/>
</dbReference>
<dbReference type="GO" id="GO:0045727">
    <property type="term" value="P:positive regulation of translation"/>
    <property type="evidence" value="ECO:0007669"/>
    <property type="project" value="UniProtKB-UniRule"/>
</dbReference>
<dbReference type="CDD" id="cd03699">
    <property type="entry name" value="EF4_II"/>
    <property type="match status" value="1"/>
</dbReference>
<dbReference type="CDD" id="cd16260">
    <property type="entry name" value="EF4_III"/>
    <property type="match status" value="1"/>
</dbReference>
<dbReference type="CDD" id="cd01890">
    <property type="entry name" value="LepA"/>
    <property type="match status" value="1"/>
</dbReference>
<dbReference type="CDD" id="cd03709">
    <property type="entry name" value="lepA_C"/>
    <property type="match status" value="1"/>
</dbReference>
<dbReference type="FunFam" id="3.40.50.300:FF:000078">
    <property type="entry name" value="Elongation factor 4"/>
    <property type="match status" value="1"/>
</dbReference>
<dbReference type="FunFam" id="2.40.30.10:FF:000015">
    <property type="entry name" value="Translation factor GUF1, mitochondrial"/>
    <property type="match status" value="1"/>
</dbReference>
<dbReference type="FunFam" id="3.30.70.240:FF:000007">
    <property type="entry name" value="Translation factor GUF1, mitochondrial"/>
    <property type="match status" value="1"/>
</dbReference>
<dbReference type="FunFam" id="3.30.70.2570:FF:000001">
    <property type="entry name" value="Translation factor GUF1, mitochondrial"/>
    <property type="match status" value="1"/>
</dbReference>
<dbReference type="FunFam" id="3.30.70.870:FF:000004">
    <property type="entry name" value="Translation factor GUF1, mitochondrial"/>
    <property type="match status" value="1"/>
</dbReference>
<dbReference type="Gene3D" id="3.30.70.240">
    <property type="match status" value="1"/>
</dbReference>
<dbReference type="Gene3D" id="3.30.70.2570">
    <property type="entry name" value="Elongation factor 4, C-terminal domain"/>
    <property type="match status" value="1"/>
</dbReference>
<dbReference type="Gene3D" id="3.30.70.870">
    <property type="entry name" value="Elongation Factor G (Translational Gtpase), domain 3"/>
    <property type="match status" value="1"/>
</dbReference>
<dbReference type="Gene3D" id="3.40.50.300">
    <property type="entry name" value="P-loop containing nucleotide triphosphate hydrolases"/>
    <property type="match status" value="1"/>
</dbReference>
<dbReference type="Gene3D" id="2.40.30.10">
    <property type="entry name" value="Translation factors"/>
    <property type="match status" value="1"/>
</dbReference>
<dbReference type="HAMAP" id="MF_00071">
    <property type="entry name" value="LepA"/>
    <property type="match status" value="1"/>
</dbReference>
<dbReference type="InterPro" id="IPR006297">
    <property type="entry name" value="EF-4"/>
</dbReference>
<dbReference type="InterPro" id="IPR035647">
    <property type="entry name" value="EFG_III/V"/>
</dbReference>
<dbReference type="InterPro" id="IPR000640">
    <property type="entry name" value="EFG_V-like"/>
</dbReference>
<dbReference type="InterPro" id="IPR004161">
    <property type="entry name" value="EFTu-like_2"/>
</dbReference>
<dbReference type="InterPro" id="IPR031157">
    <property type="entry name" value="G_TR_CS"/>
</dbReference>
<dbReference type="InterPro" id="IPR038363">
    <property type="entry name" value="LepA_C_sf"/>
</dbReference>
<dbReference type="InterPro" id="IPR013842">
    <property type="entry name" value="LepA_CTD"/>
</dbReference>
<dbReference type="InterPro" id="IPR035654">
    <property type="entry name" value="LepA_IV"/>
</dbReference>
<dbReference type="InterPro" id="IPR027417">
    <property type="entry name" value="P-loop_NTPase"/>
</dbReference>
<dbReference type="InterPro" id="IPR005225">
    <property type="entry name" value="Small_GTP-bd"/>
</dbReference>
<dbReference type="InterPro" id="IPR000795">
    <property type="entry name" value="T_Tr_GTP-bd_dom"/>
</dbReference>
<dbReference type="InterPro" id="IPR009000">
    <property type="entry name" value="Transl_B-barrel_sf"/>
</dbReference>
<dbReference type="NCBIfam" id="TIGR01393">
    <property type="entry name" value="lepA"/>
    <property type="match status" value="1"/>
</dbReference>
<dbReference type="NCBIfam" id="TIGR00231">
    <property type="entry name" value="small_GTP"/>
    <property type="match status" value="1"/>
</dbReference>
<dbReference type="PANTHER" id="PTHR43512:SF4">
    <property type="entry name" value="TRANSLATION FACTOR GUF1 HOMOLOG, CHLOROPLASTIC"/>
    <property type="match status" value="1"/>
</dbReference>
<dbReference type="PANTHER" id="PTHR43512">
    <property type="entry name" value="TRANSLATION FACTOR GUF1-RELATED"/>
    <property type="match status" value="1"/>
</dbReference>
<dbReference type="Pfam" id="PF00679">
    <property type="entry name" value="EFG_C"/>
    <property type="match status" value="1"/>
</dbReference>
<dbReference type="Pfam" id="PF00009">
    <property type="entry name" value="GTP_EFTU"/>
    <property type="match status" value="1"/>
</dbReference>
<dbReference type="Pfam" id="PF03144">
    <property type="entry name" value="GTP_EFTU_D2"/>
    <property type="match status" value="1"/>
</dbReference>
<dbReference type="Pfam" id="PF06421">
    <property type="entry name" value="LepA_C"/>
    <property type="match status" value="1"/>
</dbReference>
<dbReference type="PRINTS" id="PR00315">
    <property type="entry name" value="ELONGATNFCT"/>
</dbReference>
<dbReference type="SMART" id="SM00838">
    <property type="entry name" value="EFG_C"/>
    <property type="match status" value="1"/>
</dbReference>
<dbReference type="SUPFAM" id="SSF54980">
    <property type="entry name" value="EF-G C-terminal domain-like"/>
    <property type="match status" value="2"/>
</dbReference>
<dbReference type="SUPFAM" id="SSF52540">
    <property type="entry name" value="P-loop containing nucleoside triphosphate hydrolases"/>
    <property type="match status" value="1"/>
</dbReference>
<dbReference type="SUPFAM" id="SSF50447">
    <property type="entry name" value="Translation proteins"/>
    <property type="match status" value="1"/>
</dbReference>
<dbReference type="PROSITE" id="PS00301">
    <property type="entry name" value="G_TR_1"/>
    <property type="match status" value="1"/>
</dbReference>
<dbReference type="PROSITE" id="PS51722">
    <property type="entry name" value="G_TR_2"/>
    <property type="match status" value="1"/>
</dbReference>
<name>LEPA_STAAW</name>
<feature type="chain" id="PRO_0000176345" description="Elongation factor 4">
    <location>
        <begin position="1"/>
        <end position="607"/>
    </location>
</feature>
<feature type="domain" description="tr-type G">
    <location>
        <begin position="11"/>
        <end position="193"/>
    </location>
</feature>
<feature type="binding site" evidence="1">
    <location>
        <begin position="23"/>
        <end position="28"/>
    </location>
    <ligand>
        <name>GTP</name>
        <dbReference type="ChEBI" id="CHEBI:37565"/>
    </ligand>
</feature>
<feature type="binding site" evidence="1">
    <location>
        <begin position="140"/>
        <end position="143"/>
    </location>
    <ligand>
        <name>GTP</name>
        <dbReference type="ChEBI" id="CHEBI:37565"/>
    </ligand>
</feature>
<accession>Q8NWA7</accession>
<comment type="function">
    <text evidence="1">Required for accurate and efficient protein synthesis under certain stress conditions. May act as a fidelity factor of the translation reaction, by catalyzing a one-codon backward translocation of tRNAs on improperly translocated ribosomes. Back-translocation proceeds from a post-translocation (POST) complex to a pre-translocation (PRE) complex, thus giving elongation factor G a second chance to translocate the tRNAs correctly. Binds to ribosomes in a GTP-dependent manner.</text>
</comment>
<comment type="catalytic activity">
    <reaction evidence="1">
        <text>GTP + H2O = GDP + phosphate + H(+)</text>
        <dbReference type="Rhea" id="RHEA:19669"/>
        <dbReference type="ChEBI" id="CHEBI:15377"/>
        <dbReference type="ChEBI" id="CHEBI:15378"/>
        <dbReference type="ChEBI" id="CHEBI:37565"/>
        <dbReference type="ChEBI" id="CHEBI:43474"/>
        <dbReference type="ChEBI" id="CHEBI:58189"/>
        <dbReference type="EC" id="3.6.5.n1"/>
    </reaction>
</comment>
<comment type="subcellular location">
    <subcellularLocation>
        <location evidence="1">Cell membrane</location>
        <topology evidence="1">Peripheral membrane protein</topology>
        <orientation evidence="1">Cytoplasmic side</orientation>
    </subcellularLocation>
</comment>
<comment type="similarity">
    <text evidence="1">Belongs to the TRAFAC class translation factor GTPase superfamily. Classic translation factor GTPase family. LepA subfamily.</text>
</comment>
<reference key="1">
    <citation type="journal article" date="2002" name="Lancet">
        <title>Genome and virulence determinants of high virulence community-acquired MRSA.</title>
        <authorList>
            <person name="Baba T."/>
            <person name="Takeuchi F."/>
            <person name="Kuroda M."/>
            <person name="Yuzawa H."/>
            <person name="Aoki K."/>
            <person name="Oguchi A."/>
            <person name="Nagai Y."/>
            <person name="Iwama N."/>
            <person name="Asano K."/>
            <person name="Naimi T."/>
            <person name="Kuroda H."/>
            <person name="Cui L."/>
            <person name="Yamamoto K."/>
            <person name="Hiramatsu K."/>
        </authorList>
    </citation>
    <scope>NUCLEOTIDE SEQUENCE [LARGE SCALE GENOMIC DNA]</scope>
    <source>
        <strain>MW2</strain>
    </source>
</reference>